<sequence length="1074" mass="118522">MILSITFQLDPISNNSTSLSNSIDNRSSINVTALQMQQGSKTYNLDQNSSYKTVFLAICQLFGIKESSAQDYCLQLESSKKYLNWPPQSDESKTKHIVKQLYESGETALVLQLNPTYRSSKWVKALNDSETNEKDIMFHLKYKLQENEFAESFIEQNGMEGILRMVTNGKGNAQTYSLASLRACLEYVSAMEIITKTPHLVKQLFSLVDSNVVGVCRGALELLFVLCDFRKEEGFKSVHLAAKGTAVAQGKKPYLNVIKLLDSGDLETKINAFTLLNVLLSNCPTDEKVGKLCKKWGELGLDDKLRSLTSIQQQEFQIQLEIYEETSGVNLRTKASRLEAICNRLKSKLTEYEAQQPLIAILKEELKLAQQLIKEASTDRVFLSSHPMQRYLGPTIQSYPADLSFLKTTAAERDKINEFEKKILAINEQLRQETKLSEELKNQVLANKKQFDSTIAELNEENQRLTQVEVKFKLQQSISPSQDSSNNQKASSSSSNTSTLNDSDIQSIQSSLKEATLEIERLKLAIEEKMPPNEAQQIFSQSLITTAAFTPTSPDISNDGQPISGGGAPPPSPSPPPPISGGGAPPPPPPPPPPPSGGGAPPPPPPPPPSGGKKAGAPGAPPTGPAAIQPNKPVINPSSKMKPLYWKRIILPPSNRNESIWDQVLEPTFDSKDFENLFCAKKKAVDSSLSTNPSSTTGKEGEKVKLVSLVDIKKSNSIAFMLAKIPTAEGLKKAIDTVDNSILGKEIIKTLITNVPTEQDYQLIKGSEIHESKLDKPERWILEIYGFPMMKERLVAWLFQLEYQEMYNNIIQILEKLQNAIKDTKSSDSLKKILGIVLVLGNYMNGGSGRGQADGFTLEILDSLATSKDVENKTSLLDYVSKISMEKYPKTMNVAQELDSLKLVQLSISDMSTDINDLEKQFNISKNNCKKVLEANIPSSSKFQSTIGSFLEKTEIDIKNLKENQKNIVDSFIQLVEFFGYPKSYATTASCQQFFNSIYSFSLLFSKQCQKIEKEREALAKASGDNGAVQNKKIAGGADPLAALANAIKLGQTGLRKRPGPENSSGGSQLNLNK</sequence>
<reference key="1">
    <citation type="journal article" date="2002" name="Nature">
        <title>Sequence and analysis of chromosome 2 of Dictyostelium discoideum.</title>
        <authorList>
            <person name="Gloeckner G."/>
            <person name="Eichinger L."/>
            <person name="Szafranski K."/>
            <person name="Pachebat J.A."/>
            <person name="Bankier A.T."/>
            <person name="Dear P.H."/>
            <person name="Lehmann R."/>
            <person name="Baumgart C."/>
            <person name="Parra G."/>
            <person name="Abril J.F."/>
            <person name="Guigo R."/>
            <person name="Kumpf K."/>
            <person name="Tunggal B."/>
            <person name="Cox E.C."/>
            <person name="Quail M.A."/>
            <person name="Platzer M."/>
            <person name="Rosenthal A."/>
            <person name="Noegel A.A."/>
        </authorList>
    </citation>
    <scope>NUCLEOTIDE SEQUENCE [LARGE SCALE GENOMIC DNA]</scope>
    <source>
        <strain>AX4</strain>
    </source>
</reference>
<reference key="2">
    <citation type="journal article" date="2005" name="Nature">
        <title>The genome of the social amoeba Dictyostelium discoideum.</title>
        <authorList>
            <person name="Eichinger L."/>
            <person name="Pachebat J.A."/>
            <person name="Gloeckner G."/>
            <person name="Rajandream M.A."/>
            <person name="Sucgang R."/>
            <person name="Berriman M."/>
            <person name="Song J."/>
            <person name="Olsen R."/>
            <person name="Szafranski K."/>
            <person name="Xu Q."/>
            <person name="Tunggal B."/>
            <person name="Kummerfeld S."/>
            <person name="Madera M."/>
            <person name="Konfortov B.A."/>
            <person name="Rivero F."/>
            <person name="Bankier A.T."/>
            <person name="Lehmann R."/>
            <person name="Hamlin N."/>
            <person name="Davies R."/>
            <person name="Gaudet P."/>
            <person name="Fey P."/>
            <person name="Pilcher K."/>
            <person name="Chen G."/>
            <person name="Saunders D."/>
            <person name="Sodergren E.J."/>
            <person name="Davis P."/>
            <person name="Kerhornou A."/>
            <person name="Nie X."/>
            <person name="Hall N."/>
            <person name="Anjard C."/>
            <person name="Hemphill L."/>
            <person name="Bason N."/>
            <person name="Farbrother P."/>
            <person name="Desany B."/>
            <person name="Just E."/>
            <person name="Morio T."/>
            <person name="Rost R."/>
            <person name="Churcher C.M."/>
            <person name="Cooper J."/>
            <person name="Haydock S."/>
            <person name="van Driessche N."/>
            <person name="Cronin A."/>
            <person name="Goodhead I."/>
            <person name="Muzny D.M."/>
            <person name="Mourier T."/>
            <person name="Pain A."/>
            <person name="Lu M."/>
            <person name="Harper D."/>
            <person name="Lindsay R."/>
            <person name="Hauser H."/>
            <person name="James K.D."/>
            <person name="Quiles M."/>
            <person name="Madan Babu M."/>
            <person name="Saito T."/>
            <person name="Buchrieser C."/>
            <person name="Wardroper A."/>
            <person name="Felder M."/>
            <person name="Thangavelu M."/>
            <person name="Johnson D."/>
            <person name="Knights A."/>
            <person name="Loulseged H."/>
            <person name="Mungall K.L."/>
            <person name="Oliver K."/>
            <person name="Price C."/>
            <person name="Quail M.A."/>
            <person name="Urushihara H."/>
            <person name="Hernandez J."/>
            <person name="Rabbinowitsch E."/>
            <person name="Steffen D."/>
            <person name="Sanders M."/>
            <person name="Ma J."/>
            <person name="Kohara Y."/>
            <person name="Sharp S."/>
            <person name="Simmonds M.N."/>
            <person name="Spiegler S."/>
            <person name="Tivey A."/>
            <person name="Sugano S."/>
            <person name="White B."/>
            <person name="Walker D."/>
            <person name="Woodward J.R."/>
            <person name="Winckler T."/>
            <person name="Tanaka Y."/>
            <person name="Shaulsky G."/>
            <person name="Schleicher M."/>
            <person name="Weinstock G.M."/>
            <person name="Rosenthal A."/>
            <person name="Cox E.C."/>
            <person name="Chisholm R.L."/>
            <person name="Gibbs R.A."/>
            <person name="Loomis W.F."/>
            <person name="Platzer M."/>
            <person name="Kay R.R."/>
            <person name="Williams J.G."/>
            <person name="Dear P.H."/>
            <person name="Noegel A.A."/>
            <person name="Barrell B.G."/>
            <person name="Kuspa A."/>
        </authorList>
    </citation>
    <scope>NUCLEOTIDE SEQUENCE [LARGE SCALE GENOMIC DNA]</scope>
    <source>
        <strain>AX4</strain>
    </source>
</reference>
<reference key="3">
    <citation type="journal article" date="2004" name="Protoplasma">
        <title>Evolutionarily conserved modules in actin nucleation: lessons from Dictyostelium discoideum and plants. Review article.</title>
        <authorList>
            <person name="Cvrckova F."/>
            <person name="Rivero F."/>
            <person name="Bavlnka B."/>
        </authorList>
    </citation>
    <scope>NOMENCLATURE</scope>
</reference>
<reference key="4">
    <citation type="journal article" date="2005" name="BMC Genomics">
        <title>A comparative sequence analysis reveals a common GBD/FH3-FH1-FH2-DAD architecture in formins from Dictyostelium, fungi and metazoa.</title>
        <authorList>
            <person name="Rivero F."/>
            <person name="Muramoto T."/>
            <person name="Meyer A.-K."/>
            <person name="Urushihara H."/>
            <person name="Uyeda T.Q.P."/>
            <person name="Kitayama C."/>
        </authorList>
    </citation>
    <scope>DEVELOPMENTAL STAGE</scope>
</reference>
<reference key="5">
    <citation type="journal article" date="2006" name="Eur. J. Cell Biol.">
        <title>Rho GTPase signaling in Dictyostelium discoideum: insights from the genome.</title>
        <authorList>
            <person name="Vlahou G."/>
            <person name="Rivero F."/>
        </authorList>
    </citation>
    <scope>INTERACTION WITH RHO GTPASE</scope>
</reference>
<protein>
    <recommendedName>
        <fullName>Formin-G</fullName>
    </recommendedName>
</protein>
<dbReference type="EMBL" id="AAFI02000019">
    <property type="protein sequence ID" value="EAS66907.1"/>
    <property type="molecule type" value="Genomic_DNA"/>
</dbReference>
<dbReference type="RefSeq" id="XP_001134591.1">
    <property type="nucleotide sequence ID" value="XM_001134591.1"/>
</dbReference>
<dbReference type="SMR" id="Q1ZXK2"/>
<dbReference type="FunCoup" id="Q1ZXK2">
    <property type="interactions" value="1"/>
</dbReference>
<dbReference type="STRING" id="44689.Q1ZXK2"/>
<dbReference type="GlyGen" id="Q1ZXK2">
    <property type="glycosylation" value="1 site"/>
</dbReference>
<dbReference type="PaxDb" id="44689-DDB0231630"/>
<dbReference type="EnsemblProtists" id="EAS66907">
    <property type="protein sequence ID" value="EAS66907"/>
    <property type="gene ID" value="DDB_G0277175"/>
</dbReference>
<dbReference type="GeneID" id="8620897"/>
<dbReference type="KEGG" id="ddi:DDB_G0277175"/>
<dbReference type="dictyBase" id="DDB_G0277175">
    <property type="gene designation" value="forG"/>
</dbReference>
<dbReference type="VEuPathDB" id="AmoebaDB:DDB_G0277175"/>
<dbReference type="eggNOG" id="KOG1922">
    <property type="taxonomic scope" value="Eukaryota"/>
</dbReference>
<dbReference type="eggNOG" id="KOG1925">
    <property type="taxonomic scope" value="Eukaryota"/>
</dbReference>
<dbReference type="HOGENOM" id="CLU_287208_0_0_1"/>
<dbReference type="InParanoid" id="Q1ZXK2"/>
<dbReference type="OMA" id="KKYLNWP"/>
<dbReference type="PRO" id="PR:Q1ZXK2"/>
<dbReference type="Proteomes" id="UP000002195">
    <property type="component" value="Chromosome 2"/>
</dbReference>
<dbReference type="GO" id="GO:0005737">
    <property type="term" value="C:cytoplasm"/>
    <property type="evidence" value="ECO:0000318"/>
    <property type="project" value="GO_Central"/>
</dbReference>
<dbReference type="GO" id="GO:0005856">
    <property type="term" value="C:cytoskeleton"/>
    <property type="evidence" value="ECO:0000318"/>
    <property type="project" value="GO_Central"/>
</dbReference>
<dbReference type="GO" id="GO:0070687">
    <property type="term" value="C:macropinocytic cup cytoskeleton"/>
    <property type="evidence" value="ECO:0000314"/>
    <property type="project" value="dictyBase"/>
</dbReference>
<dbReference type="GO" id="GO:0001891">
    <property type="term" value="C:phagocytic cup"/>
    <property type="evidence" value="ECO:0000314"/>
    <property type="project" value="dictyBase"/>
</dbReference>
<dbReference type="GO" id="GO:0051015">
    <property type="term" value="F:actin filament binding"/>
    <property type="evidence" value="ECO:0000314"/>
    <property type="project" value="dictyBase"/>
</dbReference>
<dbReference type="GO" id="GO:0005522">
    <property type="term" value="F:profilin binding"/>
    <property type="evidence" value="ECO:0000250"/>
    <property type="project" value="dictyBase"/>
</dbReference>
<dbReference type="GO" id="GO:0070060">
    <property type="term" value="P:'de novo' actin filament nucleation"/>
    <property type="evidence" value="ECO:0000314"/>
    <property type="project" value="dictyBase"/>
</dbReference>
<dbReference type="GO" id="GO:0030866">
    <property type="term" value="P:cortical actin cytoskeleton organization"/>
    <property type="evidence" value="ECO:0000315"/>
    <property type="project" value="dictyBase"/>
</dbReference>
<dbReference type="GO" id="GO:0006911">
    <property type="term" value="P:phagocytosis, engulfment"/>
    <property type="evidence" value="ECO:0000315"/>
    <property type="project" value="dictyBase"/>
</dbReference>
<dbReference type="GO" id="GO:0030838">
    <property type="term" value="P:positive regulation of actin filament polymerization"/>
    <property type="evidence" value="ECO:0000315"/>
    <property type="project" value="dictyBase"/>
</dbReference>
<dbReference type="GO" id="GO:1905303">
    <property type="term" value="P:positive regulation of macropinocytosis"/>
    <property type="evidence" value="ECO:0000315"/>
    <property type="project" value="dictyBase"/>
</dbReference>
<dbReference type="FunFam" id="1.25.10.10:FF:000056">
    <property type="entry name" value="FH1/FH2 domain-containing protein 3 isoform X1"/>
    <property type="match status" value="1"/>
</dbReference>
<dbReference type="Gene3D" id="1.20.58.2220">
    <property type="entry name" value="Formin, FH2 domain"/>
    <property type="match status" value="1"/>
</dbReference>
<dbReference type="Gene3D" id="1.25.10.10">
    <property type="entry name" value="Leucine-rich Repeat Variant"/>
    <property type="match status" value="1"/>
</dbReference>
<dbReference type="InterPro" id="IPR011989">
    <property type="entry name" value="ARM-like"/>
</dbReference>
<dbReference type="InterPro" id="IPR016024">
    <property type="entry name" value="ARM-type_fold"/>
</dbReference>
<dbReference type="InterPro" id="IPR015425">
    <property type="entry name" value="FH2_Formin"/>
</dbReference>
<dbReference type="InterPro" id="IPR042201">
    <property type="entry name" value="FH2_Formin_sf"/>
</dbReference>
<dbReference type="InterPro" id="IPR056771">
    <property type="entry name" value="FH3_FHOD1-3-like"/>
</dbReference>
<dbReference type="InterPro" id="IPR014768">
    <property type="entry name" value="GBD/FH3_dom"/>
</dbReference>
<dbReference type="PANTHER" id="PTHR45920">
    <property type="entry name" value="FORMIN HOMOLOGY 2 DOMAIN CONTAINING, ISOFORM I"/>
    <property type="match status" value="1"/>
</dbReference>
<dbReference type="PANTHER" id="PTHR45920:SF7">
    <property type="entry name" value="FORMIN-G"/>
    <property type="match status" value="1"/>
</dbReference>
<dbReference type="Pfam" id="PF02181">
    <property type="entry name" value="FH2"/>
    <property type="match status" value="1"/>
</dbReference>
<dbReference type="Pfam" id="PF24959">
    <property type="entry name" value="FH3_FHOD1-3"/>
    <property type="match status" value="1"/>
</dbReference>
<dbReference type="PRINTS" id="PR00806">
    <property type="entry name" value="VINCULIN"/>
</dbReference>
<dbReference type="SMART" id="SM00498">
    <property type="entry name" value="FH2"/>
    <property type="match status" value="1"/>
</dbReference>
<dbReference type="SUPFAM" id="SSF48371">
    <property type="entry name" value="ARM repeat"/>
    <property type="match status" value="1"/>
</dbReference>
<dbReference type="SUPFAM" id="SSF101447">
    <property type="entry name" value="Formin homology 2 domain (FH2 domain)"/>
    <property type="match status" value="1"/>
</dbReference>
<dbReference type="PROSITE" id="PS51444">
    <property type="entry name" value="FH2"/>
    <property type="match status" value="1"/>
</dbReference>
<dbReference type="PROSITE" id="PS51232">
    <property type="entry name" value="GBD_FH3"/>
    <property type="match status" value="1"/>
</dbReference>
<proteinExistence type="evidence at protein level"/>
<feature type="chain" id="PRO_0000363919" description="Formin-G">
    <location>
        <begin position="1"/>
        <end position="1074"/>
    </location>
</feature>
<feature type="domain" description="GBD/FH3" evidence="3">
    <location>
        <begin position="34"/>
        <end position="423"/>
    </location>
</feature>
<feature type="domain" description="FH1">
    <location>
        <begin position="597"/>
        <end position="623"/>
    </location>
</feature>
<feature type="domain" description="FH2" evidence="4">
    <location>
        <begin position="631"/>
        <end position="1031"/>
    </location>
</feature>
<feature type="domain" description="DAD">
    <location>
        <begin position="1037"/>
        <end position="1073"/>
    </location>
</feature>
<feature type="region of interest" description="Disordered" evidence="5">
    <location>
        <begin position="476"/>
        <end position="507"/>
    </location>
</feature>
<feature type="region of interest" description="Disordered" evidence="5">
    <location>
        <begin position="549"/>
        <end position="639"/>
    </location>
</feature>
<feature type="region of interest" description="Disordered" evidence="5">
    <location>
        <begin position="1053"/>
        <end position="1074"/>
    </location>
</feature>
<feature type="coiled-coil region" evidence="2">
    <location>
        <begin position="502"/>
        <end position="530"/>
    </location>
</feature>
<feature type="coiled-coil region" evidence="2">
    <location>
        <begin position="914"/>
        <end position="971"/>
    </location>
</feature>
<feature type="compositionally biased region" description="Low complexity" evidence="5">
    <location>
        <begin position="481"/>
        <end position="503"/>
    </location>
</feature>
<feature type="compositionally biased region" description="Polar residues" evidence="5">
    <location>
        <begin position="549"/>
        <end position="561"/>
    </location>
</feature>
<feature type="compositionally biased region" description="Pro residues" evidence="5">
    <location>
        <begin position="568"/>
        <end position="610"/>
    </location>
</feature>
<feature type="compositionally biased region" description="Polar residues" evidence="5">
    <location>
        <begin position="1062"/>
        <end position="1074"/>
    </location>
</feature>
<organism>
    <name type="scientific">Dictyostelium discoideum</name>
    <name type="common">Social amoeba</name>
    <dbReference type="NCBI Taxonomy" id="44689"/>
    <lineage>
        <taxon>Eukaryota</taxon>
        <taxon>Amoebozoa</taxon>
        <taxon>Evosea</taxon>
        <taxon>Eumycetozoa</taxon>
        <taxon>Dictyostelia</taxon>
        <taxon>Dictyosteliales</taxon>
        <taxon>Dictyosteliaceae</taxon>
        <taxon>Dictyostelium</taxon>
    </lineage>
</organism>
<gene>
    <name type="primary">forG</name>
    <name type="ORF">DDB_G0277175</name>
</gene>
<comment type="function">
    <text evidence="1">Formins play an important role in the nucleation of actin and the formation of linear actin filaments.</text>
</comment>
<comment type="subunit">
    <text evidence="7">Interacts (via GBD/FH3 domain) with activated Rho-GTPases.</text>
</comment>
<comment type="developmental stage">
    <text evidence="6">Expression is kept at constant levels after the onset of development.</text>
</comment>
<comment type="domain">
    <text evidence="1">DRFs are regulated by intramolecular GBD-DAD binding where Rho-GTP activates the DRFs by disrupting the GBD-DAD interaction.</text>
</comment>
<comment type="domain">
    <text evidence="1">The DAD domain regulates activation via by an autoinhibitory interaction with the GBD/FH3 domain. This autoinhibition is released upon competitive binding of an activated GTPase. The release of DAD allows the FH2 domain to then nucleate and elongate nonbranched actin filaments (By similarity).</text>
</comment>
<comment type="similarity">
    <text evidence="8">Belongs to the formin homology family. Diaphanous subfamily.</text>
</comment>
<evidence type="ECO:0000250" key="1"/>
<evidence type="ECO:0000255" key="2"/>
<evidence type="ECO:0000255" key="3">
    <source>
        <dbReference type="PROSITE-ProRule" id="PRU00579"/>
    </source>
</evidence>
<evidence type="ECO:0000255" key="4">
    <source>
        <dbReference type="PROSITE-ProRule" id="PRU00774"/>
    </source>
</evidence>
<evidence type="ECO:0000256" key="5">
    <source>
        <dbReference type="SAM" id="MobiDB-lite"/>
    </source>
</evidence>
<evidence type="ECO:0000269" key="6">
    <source>
    </source>
</evidence>
<evidence type="ECO:0000269" key="7">
    <source>
    </source>
</evidence>
<evidence type="ECO:0000305" key="8"/>
<name>FORG_DICDI</name>
<keyword id="KW-0009">Actin-binding</keyword>
<keyword id="KW-0175">Coiled coil</keyword>
<keyword id="KW-1185">Reference proteome</keyword>
<accession>Q1ZXK2</accession>
<accession>Q86AQ6</accession>